<feature type="chain" id="PRO_1000072595" description="Deoxyribose-phosphate aldolase">
    <location>
        <begin position="1"/>
        <end position="259"/>
    </location>
</feature>
<feature type="active site" description="Proton donor/acceptor" evidence="1">
    <location>
        <position position="102"/>
    </location>
</feature>
<feature type="active site" description="Schiff-base intermediate with acetaldehyde" evidence="1">
    <location>
        <position position="167"/>
    </location>
</feature>
<feature type="active site" description="Proton donor/acceptor" evidence="1">
    <location>
        <position position="201"/>
    </location>
</feature>
<comment type="function">
    <text evidence="1">Catalyzes a reversible aldol reaction between acetaldehyde and D-glyceraldehyde 3-phosphate to generate 2-deoxy-D-ribose 5-phosphate.</text>
</comment>
<comment type="catalytic activity">
    <reaction evidence="1">
        <text>2-deoxy-D-ribose 5-phosphate = D-glyceraldehyde 3-phosphate + acetaldehyde</text>
        <dbReference type="Rhea" id="RHEA:12821"/>
        <dbReference type="ChEBI" id="CHEBI:15343"/>
        <dbReference type="ChEBI" id="CHEBI:59776"/>
        <dbReference type="ChEBI" id="CHEBI:62877"/>
        <dbReference type="EC" id="4.1.2.4"/>
    </reaction>
</comment>
<comment type="pathway">
    <text evidence="1">Carbohydrate degradation; 2-deoxy-D-ribose 1-phosphate degradation; D-glyceraldehyde 3-phosphate and acetaldehyde from 2-deoxy-alpha-D-ribose 1-phosphate: step 2/2.</text>
</comment>
<comment type="subcellular location">
    <subcellularLocation>
        <location evidence="1">Cytoplasm</location>
    </subcellularLocation>
</comment>
<comment type="similarity">
    <text evidence="1">Belongs to the DeoC/FbaB aldolase family. DeoC type 2 subfamily.</text>
</comment>
<dbReference type="EC" id="4.1.2.4" evidence="1"/>
<dbReference type="EMBL" id="CP000802">
    <property type="protein sequence ID" value="ABV08764.1"/>
    <property type="molecule type" value="Genomic_DNA"/>
</dbReference>
<dbReference type="RefSeq" id="WP_001295412.1">
    <property type="nucleotide sequence ID" value="NC_009800.1"/>
</dbReference>
<dbReference type="SMR" id="A8A8B0"/>
<dbReference type="GeneID" id="93777463"/>
<dbReference type="KEGG" id="ecx:EcHS_A4616"/>
<dbReference type="HOGENOM" id="CLU_053595_3_1_6"/>
<dbReference type="UniPathway" id="UPA00002">
    <property type="reaction ID" value="UER00468"/>
</dbReference>
<dbReference type="GO" id="GO:0005737">
    <property type="term" value="C:cytoplasm"/>
    <property type="evidence" value="ECO:0007669"/>
    <property type="project" value="UniProtKB-SubCell"/>
</dbReference>
<dbReference type="GO" id="GO:0004139">
    <property type="term" value="F:deoxyribose-phosphate aldolase activity"/>
    <property type="evidence" value="ECO:0007669"/>
    <property type="project" value="UniProtKB-UniRule"/>
</dbReference>
<dbReference type="GO" id="GO:0006018">
    <property type="term" value="P:2-deoxyribose 1-phosphate catabolic process"/>
    <property type="evidence" value="ECO:0007669"/>
    <property type="project" value="UniProtKB-UniRule"/>
</dbReference>
<dbReference type="GO" id="GO:0016052">
    <property type="term" value="P:carbohydrate catabolic process"/>
    <property type="evidence" value="ECO:0007669"/>
    <property type="project" value="TreeGrafter"/>
</dbReference>
<dbReference type="GO" id="GO:0009264">
    <property type="term" value="P:deoxyribonucleotide catabolic process"/>
    <property type="evidence" value="ECO:0007669"/>
    <property type="project" value="InterPro"/>
</dbReference>
<dbReference type="CDD" id="cd00959">
    <property type="entry name" value="DeoC"/>
    <property type="match status" value="1"/>
</dbReference>
<dbReference type="FunFam" id="3.20.20.70:FF:000034">
    <property type="entry name" value="Deoxyribose-phosphate aldolase"/>
    <property type="match status" value="1"/>
</dbReference>
<dbReference type="Gene3D" id="3.20.20.70">
    <property type="entry name" value="Aldolase class I"/>
    <property type="match status" value="1"/>
</dbReference>
<dbReference type="HAMAP" id="MF_00592">
    <property type="entry name" value="DeoC_type2"/>
    <property type="match status" value="1"/>
</dbReference>
<dbReference type="InterPro" id="IPR013785">
    <property type="entry name" value="Aldolase_TIM"/>
</dbReference>
<dbReference type="InterPro" id="IPR011343">
    <property type="entry name" value="DeoC"/>
</dbReference>
<dbReference type="InterPro" id="IPR002915">
    <property type="entry name" value="DeoC/FbaB/LacD_aldolase"/>
</dbReference>
<dbReference type="InterPro" id="IPR023649">
    <property type="entry name" value="DeoC_typeII"/>
</dbReference>
<dbReference type="NCBIfam" id="TIGR00126">
    <property type="entry name" value="deoC"/>
    <property type="match status" value="1"/>
</dbReference>
<dbReference type="PANTHER" id="PTHR10889">
    <property type="entry name" value="DEOXYRIBOSE-PHOSPHATE ALDOLASE"/>
    <property type="match status" value="1"/>
</dbReference>
<dbReference type="PANTHER" id="PTHR10889:SF3">
    <property type="entry name" value="DEOXYRIBOSE-PHOSPHATE ALDOLASE"/>
    <property type="match status" value="1"/>
</dbReference>
<dbReference type="Pfam" id="PF01791">
    <property type="entry name" value="DeoC"/>
    <property type="match status" value="1"/>
</dbReference>
<dbReference type="PIRSF" id="PIRSF001357">
    <property type="entry name" value="DeoC"/>
    <property type="match status" value="1"/>
</dbReference>
<dbReference type="SMART" id="SM01133">
    <property type="entry name" value="DeoC"/>
    <property type="match status" value="1"/>
</dbReference>
<dbReference type="SUPFAM" id="SSF51569">
    <property type="entry name" value="Aldolase"/>
    <property type="match status" value="1"/>
</dbReference>
<keyword id="KW-0963">Cytoplasm</keyword>
<keyword id="KW-0456">Lyase</keyword>
<keyword id="KW-0704">Schiff base</keyword>
<organism>
    <name type="scientific">Escherichia coli O9:H4 (strain HS)</name>
    <dbReference type="NCBI Taxonomy" id="331112"/>
    <lineage>
        <taxon>Bacteria</taxon>
        <taxon>Pseudomonadati</taxon>
        <taxon>Pseudomonadota</taxon>
        <taxon>Gammaproteobacteria</taxon>
        <taxon>Enterobacterales</taxon>
        <taxon>Enterobacteriaceae</taxon>
        <taxon>Escherichia</taxon>
    </lineage>
</organism>
<name>DEOC_ECOHS</name>
<sequence length="259" mass="27748">MTDLKASSLRALKLMDLTTLNDDDTDEKVIALCHQAKTPVGNTAAICIYPRFIPIARKTLKEQGTPEIRIATVTNFPHGNDDIEIALAETRAAIAYGADEVDVVFPYRALMAGNEQVGFDLVKACKEACAAANVLLKVIIETGELKDEALIRKASEISIKAGADFIKTSTGKVAVNATPESARIMMEVIRDMGVEKTVGFKPAGGVRTAEDAQKYLAIADELFGADWADARHYRFGASSLLASLLKALGHGDGKSASSY</sequence>
<reference key="1">
    <citation type="journal article" date="2008" name="J. Bacteriol.">
        <title>The pangenome structure of Escherichia coli: comparative genomic analysis of E. coli commensal and pathogenic isolates.</title>
        <authorList>
            <person name="Rasko D.A."/>
            <person name="Rosovitz M.J."/>
            <person name="Myers G.S.A."/>
            <person name="Mongodin E.F."/>
            <person name="Fricke W.F."/>
            <person name="Gajer P."/>
            <person name="Crabtree J."/>
            <person name="Sebaihia M."/>
            <person name="Thomson N.R."/>
            <person name="Chaudhuri R."/>
            <person name="Henderson I.R."/>
            <person name="Sperandio V."/>
            <person name="Ravel J."/>
        </authorList>
    </citation>
    <scope>NUCLEOTIDE SEQUENCE [LARGE SCALE GENOMIC DNA]</scope>
    <source>
        <strain>HS</strain>
    </source>
</reference>
<evidence type="ECO:0000255" key="1">
    <source>
        <dbReference type="HAMAP-Rule" id="MF_00592"/>
    </source>
</evidence>
<accession>A8A8B0</accession>
<gene>
    <name evidence="1" type="primary">deoC</name>
    <name type="ordered locus">EcHS_A4616</name>
</gene>
<proteinExistence type="inferred from homology"/>
<protein>
    <recommendedName>
        <fullName evidence="1">Deoxyribose-phosphate aldolase</fullName>
        <shortName evidence="1">DERA</shortName>
        <ecNumber evidence="1">4.1.2.4</ecNumber>
    </recommendedName>
    <alternativeName>
        <fullName evidence="1">2-deoxy-D-ribose 5-phosphate aldolase</fullName>
    </alternativeName>
    <alternativeName>
        <fullName evidence="1">Phosphodeoxyriboaldolase</fullName>
        <shortName evidence="1">Deoxyriboaldolase</shortName>
    </alternativeName>
</protein>